<sequence>MAHRSHTGTGPSQRQLRVGELIRRTLADVLNRGEIHDPELNRLSITVGEVRCSPDLKVATVHVMPLGGKNVEEAIALLSKHRGELRHHITRQMTLKYAPDLRFRPDETFDRLDETRRLFSDETVMRDIRGGGEADED</sequence>
<evidence type="ECO:0000255" key="1">
    <source>
        <dbReference type="HAMAP-Rule" id="MF_00003"/>
    </source>
</evidence>
<reference key="1">
    <citation type="submission" date="2007-02" db="EMBL/GenBank/DDBJ databases">
        <title>Complete sequence of chromosome 1 of Rhodobacter sphaeroides ATCC 17029.</title>
        <authorList>
            <person name="Copeland A."/>
            <person name="Lucas S."/>
            <person name="Lapidus A."/>
            <person name="Barry K."/>
            <person name="Detter J.C."/>
            <person name="Glavina del Rio T."/>
            <person name="Hammon N."/>
            <person name="Israni S."/>
            <person name="Dalin E."/>
            <person name="Tice H."/>
            <person name="Pitluck S."/>
            <person name="Kiss H."/>
            <person name="Brettin T."/>
            <person name="Bruce D."/>
            <person name="Han C."/>
            <person name="Tapia R."/>
            <person name="Gilna P."/>
            <person name="Schmutz J."/>
            <person name="Larimer F."/>
            <person name="Land M."/>
            <person name="Hauser L."/>
            <person name="Kyrpides N."/>
            <person name="Mikhailova N."/>
            <person name="Richardson P."/>
            <person name="Mackenzie C."/>
            <person name="Choudhary M."/>
            <person name="Donohue T.J."/>
            <person name="Kaplan S."/>
        </authorList>
    </citation>
    <scope>NUCLEOTIDE SEQUENCE [LARGE SCALE GENOMIC DNA]</scope>
    <source>
        <strain>ATCC 17029 / ATH 2.4.9</strain>
    </source>
</reference>
<accession>A3PNF4</accession>
<proteinExistence type="inferred from homology"/>
<organism>
    <name type="scientific">Cereibacter sphaeroides (strain ATCC 17029 / ATH 2.4.9)</name>
    <name type="common">Rhodobacter sphaeroides</name>
    <dbReference type="NCBI Taxonomy" id="349101"/>
    <lineage>
        <taxon>Bacteria</taxon>
        <taxon>Pseudomonadati</taxon>
        <taxon>Pseudomonadota</taxon>
        <taxon>Alphaproteobacteria</taxon>
        <taxon>Rhodobacterales</taxon>
        <taxon>Paracoccaceae</taxon>
        <taxon>Cereibacter</taxon>
    </lineage>
</organism>
<feature type="chain" id="PRO_0000321245" description="Ribosome-binding factor A">
    <location>
        <begin position="1"/>
        <end position="137"/>
    </location>
</feature>
<dbReference type="EMBL" id="CP000577">
    <property type="protein sequence ID" value="ABN77870.1"/>
    <property type="molecule type" value="Genomic_DNA"/>
</dbReference>
<dbReference type="RefSeq" id="WP_011841875.1">
    <property type="nucleotide sequence ID" value="NC_009049.1"/>
</dbReference>
<dbReference type="SMR" id="A3PNF4"/>
<dbReference type="KEGG" id="rsh:Rsph17029_2768"/>
<dbReference type="HOGENOM" id="CLU_089475_1_0_5"/>
<dbReference type="GO" id="GO:0005829">
    <property type="term" value="C:cytosol"/>
    <property type="evidence" value="ECO:0007669"/>
    <property type="project" value="TreeGrafter"/>
</dbReference>
<dbReference type="GO" id="GO:0043024">
    <property type="term" value="F:ribosomal small subunit binding"/>
    <property type="evidence" value="ECO:0007669"/>
    <property type="project" value="TreeGrafter"/>
</dbReference>
<dbReference type="GO" id="GO:0030490">
    <property type="term" value="P:maturation of SSU-rRNA"/>
    <property type="evidence" value="ECO:0007669"/>
    <property type="project" value="UniProtKB-UniRule"/>
</dbReference>
<dbReference type="Gene3D" id="3.30.300.20">
    <property type="match status" value="1"/>
</dbReference>
<dbReference type="HAMAP" id="MF_00003">
    <property type="entry name" value="RbfA"/>
    <property type="match status" value="1"/>
</dbReference>
<dbReference type="InterPro" id="IPR015946">
    <property type="entry name" value="KH_dom-like_a/b"/>
</dbReference>
<dbReference type="InterPro" id="IPR000238">
    <property type="entry name" value="RbfA"/>
</dbReference>
<dbReference type="InterPro" id="IPR023799">
    <property type="entry name" value="RbfA_dom_sf"/>
</dbReference>
<dbReference type="InterPro" id="IPR020053">
    <property type="entry name" value="Ribosome-bd_factorA_CS"/>
</dbReference>
<dbReference type="NCBIfam" id="NF001802">
    <property type="entry name" value="PRK00521.2-5"/>
    <property type="match status" value="1"/>
</dbReference>
<dbReference type="NCBIfam" id="TIGR00082">
    <property type="entry name" value="rbfA"/>
    <property type="match status" value="1"/>
</dbReference>
<dbReference type="PANTHER" id="PTHR33515">
    <property type="entry name" value="RIBOSOME-BINDING FACTOR A, CHLOROPLASTIC-RELATED"/>
    <property type="match status" value="1"/>
</dbReference>
<dbReference type="PANTHER" id="PTHR33515:SF1">
    <property type="entry name" value="RIBOSOME-BINDING FACTOR A, CHLOROPLASTIC-RELATED"/>
    <property type="match status" value="1"/>
</dbReference>
<dbReference type="Pfam" id="PF02033">
    <property type="entry name" value="RBFA"/>
    <property type="match status" value="1"/>
</dbReference>
<dbReference type="SUPFAM" id="SSF89919">
    <property type="entry name" value="Ribosome-binding factor A, RbfA"/>
    <property type="match status" value="1"/>
</dbReference>
<dbReference type="PROSITE" id="PS01319">
    <property type="entry name" value="RBFA"/>
    <property type="match status" value="1"/>
</dbReference>
<gene>
    <name evidence="1" type="primary">rbfA</name>
    <name type="ordered locus">Rsph17029_2768</name>
</gene>
<comment type="function">
    <text evidence="1">One of several proteins that assist in the late maturation steps of the functional core of the 30S ribosomal subunit. Associates with free 30S ribosomal subunits (but not with 30S subunits that are part of 70S ribosomes or polysomes). Required for efficient processing of 16S rRNA. May interact with the 5'-terminal helix region of 16S rRNA.</text>
</comment>
<comment type="subunit">
    <text evidence="1">Monomer. Binds 30S ribosomal subunits, but not 50S ribosomal subunits or 70S ribosomes.</text>
</comment>
<comment type="subcellular location">
    <subcellularLocation>
        <location evidence="1">Cytoplasm</location>
    </subcellularLocation>
</comment>
<comment type="similarity">
    <text evidence="1">Belongs to the RbfA family.</text>
</comment>
<protein>
    <recommendedName>
        <fullName evidence="1">Ribosome-binding factor A</fullName>
    </recommendedName>
</protein>
<name>RBFA_CERS1</name>
<keyword id="KW-0963">Cytoplasm</keyword>
<keyword id="KW-0690">Ribosome biogenesis</keyword>